<accession>A6QDP3</accession>
<feature type="chain" id="PRO_0000346272" description="D-ribose pyranase">
    <location>
        <begin position="1"/>
        <end position="134"/>
    </location>
</feature>
<feature type="active site" description="Proton donor" evidence="1">
    <location>
        <position position="20"/>
    </location>
</feature>
<feature type="binding site" evidence="1">
    <location>
        <position position="28"/>
    </location>
    <ligand>
        <name>substrate</name>
    </ligand>
</feature>
<feature type="binding site" evidence="1">
    <location>
        <position position="99"/>
    </location>
    <ligand>
        <name>substrate</name>
    </ligand>
</feature>
<feature type="binding site" evidence="1">
    <location>
        <begin position="123"/>
        <end position="125"/>
    </location>
    <ligand>
        <name>substrate</name>
    </ligand>
</feature>
<proteinExistence type="inferred from homology"/>
<keyword id="KW-0119">Carbohydrate metabolism</keyword>
<keyword id="KW-0963">Cytoplasm</keyword>
<keyword id="KW-0413">Isomerase</keyword>
<organism>
    <name type="scientific">Staphylococcus aureus (strain Newman)</name>
    <dbReference type="NCBI Taxonomy" id="426430"/>
    <lineage>
        <taxon>Bacteria</taxon>
        <taxon>Bacillati</taxon>
        <taxon>Bacillota</taxon>
        <taxon>Bacilli</taxon>
        <taxon>Bacillales</taxon>
        <taxon>Staphylococcaceae</taxon>
        <taxon>Staphylococcus</taxon>
    </lineage>
</organism>
<evidence type="ECO:0000255" key="1">
    <source>
        <dbReference type="HAMAP-Rule" id="MF_01661"/>
    </source>
</evidence>
<gene>
    <name evidence="1" type="primary">rbsD</name>
    <name type="ordered locus">NWMN_0203</name>
</gene>
<comment type="function">
    <text evidence="1">Catalyzes the interconversion of beta-pyran and beta-furan forms of D-ribose.</text>
</comment>
<comment type="catalytic activity">
    <reaction evidence="1">
        <text>beta-D-ribopyranose = beta-D-ribofuranose</text>
        <dbReference type="Rhea" id="RHEA:25432"/>
        <dbReference type="ChEBI" id="CHEBI:27476"/>
        <dbReference type="ChEBI" id="CHEBI:47002"/>
        <dbReference type="EC" id="5.4.99.62"/>
    </reaction>
</comment>
<comment type="pathway">
    <text evidence="1">Carbohydrate metabolism; D-ribose degradation; D-ribose 5-phosphate from beta-D-ribopyranose: step 1/2.</text>
</comment>
<comment type="subunit">
    <text evidence="1">Homodecamer.</text>
</comment>
<comment type="subcellular location">
    <subcellularLocation>
        <location evidence="1">Cytoplasm</location>
    </subcellularLocation>
</comment>
<comment type="similarity">
    <text evidence="1">Belongs to the RbsD / FucU family. RbsD subfamily.</text>
</comment>
<reference key="1">
    <citation type="journal article" date="2008" name="J. Bacteriol.">
        <title>Genome sequence of Staphylococcus aureus strain Newman and comparative analysis of staphylococcal genomes: polymorphism and evolution of two major pathogenicity islands.</title>
        <authorList>
            <person name="Baba T."/>
            <person name="Bae T."/>
            <person name="Schneewind O."/>
            <person name="Takeuchi F."/>
            <person name="Hiramatsu K."/>
        </authorList>
    </citation>
    <scope>NUCLEOTIDE SEQUENCE [LARGE SCALE GENOMIC DNA]</scope>
    <source>
        <strain>Newman</strain>
    </source>
</reference>
<dbReference type="EC" id="5.4.99.62" evidence="1"/>
<dbReference type="EMBL" id="AP009351">
    <property type="protein sequence ID" value="BAF66475.1"/>
    <property type="molecule type" value="Genomic_DNA"/>
</dbReference>
<dbReference type="RefSeq" id="WP_000747873.1">
    <property type="nucleotide sequence ID" value="NZ_JBBIAE010000003.1"/>
</dbReference>
<dbReference type="SMR" id="A6QDP3"/>
<dbReference type="KEGG" id="sae:NWMN_0203"/>
<dbReference type="HOGENOM" id="CLU_135498_0_0_9"/>
<dbReference type="UniPathway" id="UPA00916">
    <property type="reaction ID" value="UER00888"/>
</dbReference>
<dbReference type="Proteomes" id="UP000006386">
    <property type="component" value="Chromosome"/>
</dbReference>
<dbReference type="GO" id="GO:0005829">
    <property type="term" value="C:cytosol"/>
    <property type="evidence" value="ECO:0007669"/>
    <property type="project" value="TreeGrafter"/>
</dbReference>
<dbReference type="GO" id="GO:0062193">
    <property type="term" value="F:D-ribose pyranase activity"/>
    <property type="evidence" value="ECO:0007669"/>
    <property type="project" value="UniProtKB-EC"/>
</dbReference>
<dbReference type="GO" id="GO:0016872">
    <property type="term" value="F:intramolecular lyase activity"/>
    <property type="evidence" value="ECO:0007669"/>
    <property type="project" value="UniProtKB-UniRule"/>
</dbReference>
<dbReference type="GO" id="GO:0048029">
    <property type="term" value="F:monosaccharide binding"/>
    <property type="evidence" value="ECO:0007669"/>
    <property type="project" value="InterPro"/>
</dbReference>
<dbReference type="GO" id="GO:0019303">
    <property type="term" value="P:D-ribose catabolic process"/>
    <property type="evidence" value="ECO:0007669"/>
    <property type="project" value="UniProtKB-UniRule"/>
</dbReference>
<dbReference type="FunFam" id="3.40.1650.10:FF:000004">
    <property type="entry name" value="D-ribose pyranase"/>
    <property type="match status" value="1"/>
</dbReference>
<dbReference type="Gene3D" id="3.40.1650.10">
    <property type="entry name" value="RbsD-like domain"/>
    <property type="match status" value="1"/>
</dbReference>
<dbReference type="HAMAP" id="MF_01661">
    <property type="entry name" value="D_rib_pyranase"/>
    <property type="match status" value="1"/>
</dbReference>
<dbReference type="InterPro" id="IPR023064">
    <property type="entry name" value="D-ribose_pyranase"/>
</dbReference>
<dbReference type="InterPro" id="IPR023750">
    <property type="entry name" value="RbsD-like_sf"/>
</dbReference>
<dbReference type="InterPro" id="IPR007721">
    <property type="entry name" value="RbsD_FucU"/>
</dbReference>
<dbReference type="NCBIfam" id="NF008761">
    <property type="entry name" value="PRK11797.1"/>
    <property type="match status" value="1"/>
</dbReference>
<dbReference type="PANTHER" id="PTHR37831">
    <property type="entry name" value="D-RIBOSE PYRANASE"/>
    <property type="match status" value="1"/>
</dbReference>
<dbReference type="PANTHER" id="PTHR37831:SF1">
    <property type="entry name" value="D-RIBOSE PYRANASE"/>
    <property type="match status" value="1"/>
</dbReference>
<dbReference type="Pfam" id="PF05025">
    <property type="entry name" value="RbsD_FucU"/>
    <property type="match status" value="1"/>
</dbReference>
<dbReference type="SUPFAM" id="SSF102546">
    <property type="entry name" value="RbsD-like"/>
    <property type="match status" value="1"/>
</dbReference>
<name>RBSD_STAAE</name>
<protein>
    <recommendedName>
        <fullName evidence="1">D-ribose pyranase</fullName>
        <ecNumber evidence="1">5.4.99.62</ecNumber>
    </recommendedName>
</protein>
<sequence>MKKSAVLNEHISKAIATIGHFDLLTINDAGMPIPNDHRRIDLAVTKNLPRFIDVLATVLEEMEIQKIYLAEEIKEHNPTQLQQIKQLISSEIEIIFIPHEEMKSNLAHPLNKGNIRTGETTPYSNIALESNVTF</sequence>